<protein>
    <recommendedName>
        <fullName evidence="5">Homeobox protein MSX-1</fullName>
    </recommendedName>
    <alternativeName>
        <fullName>Msh homeobox 1-like protein</fullName>
    </alternativeName>
</protein>
<evidence type="ECO:0000250" key="1">
    <source>
        <dbReference type="UniProtKB" id="P13297"/>
    </source>
</evidence>
<evidence type="ECO:0000250" key="2">
    <source>
        <dbReference type="UniProtKB" id="P28360"/>
    </source>
</evidence>
<evidence type="ECO:0000255" key="3">
    <source>
        <dbReference type="PROSITE-ProRule" id="PRU00108"/>
    </source>
</evidence>
<evidence type="ECO:0000256" key="4">
    <source>
        <dbReference type="SAM" id="MobiDB-lite"/>
    </source>
</evidence>
<evidence type="ECO:0000305" key="5"/>
<dbReference type="EMBL" id="DQ067479">
    <property type="protein sequence ID" value="AAZ30470.1"/>
    <property type="molecule type" value="Genomic_DNA"/>
</dbReference>
<dbReference type="EMBL" id="DQ067478">
    <property type="protein sequence ID" value="AAZ30470.1"/>
    <property type="status" value="JOINED"/>
    <property type="molecule type" value="Genomic_DNA"/>
</dbReference>
<dbReference type="SMR" id="Q2VL83"/>
<dbReference type="GO" id="GO:0034399">
    <property type="term" value="C:nuclear periphery"/>
    <property type="evidence" value="ECO:0000250"/>
    <property type="project" value="UniProtKB"/>
</dbReference>
<dbReference type="GO" id="GO:0000981">
    <property type="term" value="F:DNA-binding transcription factor activity, RNA polymerase II-specific"/>
    <property type="evidence" value="ECO:0007669"/>
    <property type="project" value="InterPro"/>
</dbReference>
<dbReference type="GO" id="GO:0000977">
    <property type="term" value="F:RNA polymerase II transcription regulatory region sequence-specific DNA binding"/>
    <property type="evidence" value="ECO:0007669"/>
    <property type="project" value="TreeGrafter"/>
</dbReference>
<dbReference type="GO" id="GO:0000976">
    <property type="term" value="F:transcription cis-regulatory region binding"/>
    <property type="evidence" value="ECO:0000250"/>
    <property type="project" value="UniProtKB"/>
</dbReference>
<dbReference type="GO" id="GO:0048598">
    <property type="term" value="P:embryonic morphogenesis"/>
    <property type="evidence" value="ECO:0007669"/>
    <property type="project" value="TreeGrafter"/>
</dbReference>
<dbReference type="GO" id="GO:0048839">
    <property type="term" value="P:inner ear development"/>
    <property type="evidence" value="ECO:0000250"/>
    <property type="project" value="UniProtKB"/>
</dbReference>
<dbReference type="GO" id="GO:0010629">
    <property type="term" value="P:negative regulation of gene expression"/>
    <property type="evidence" value="ECO:0000250"/>
    <property type="project" value="UniProtKB"/>
</dbReference>
<dbReference type="GO" id="GO:1901330">
    <property type="term" value="P:negative regulation of odontoblast differentiation"/>
    <property type="evidence" value="ECO:0000250"/>
    <property type="project" value="UniProtKB"/>
</dbReference>
<dbReference type="GO" id="GO:0043584">
    <property type="term" value="P:nose development"/>
    <property type="evidence" value="ECO:0000250"/>
    <property type="project" value="UniProtKB"/>
</dbReference>
<dbReference type="GO" id="GO:0045787">
    <property type="term" value="P:positive regulation of cell cycle"/>
    <property type="evidence" value="ECO:0000250"/>
    <property type="project" value="UniProtKB"/>
</dbReference>
<dbReference type="GO" id="GO:0042482">
    <property type="term" value="P:positive regulation of odontogenesis"/>
    <property type="evidence" value="ECO:0000250"/>
    <property type="project" value="UniProtKB"/>
</dbReference>
<dbReference type="GO" id="GO:0042481">
    <property type="term" value="P:regulation of odontogenesis"/>
    <property type="evidence" value="ECO:0000250"/>
    <property type="project" value="UniProtKB"/>
</dbReference>
<dbReference type="GO" id="GO:0060021">
    <property type="term" value="P:roof of mouth development"/>
    <property type="evidence" value="ECO:0000250"/>
    <property type="project" value="UniProtKB"/>
</dbReference>
<dbReference type="CDD" id="cd00086">
    <property type="entry name" value="homeodomain"/>
    <property type="match status" value="1"/>
</dbReference>
<dbReference type="FunFam" id="1.10.10.60:FF:000134">
    <property type="entry name" value="Homeobox protein MSX-1"/>
    <property type="match status" value="1"/>
</dbReference>
<dbReference type="Gene3D" id="1.10.10.60">
    <property type="entry name" value="Homeodomain-like"/>
    <property type="match status" value="1"/>
</dbReference>
<dbReference type="InterPro" id="IPR001356">
    <property type="entry name" value="HD"/>
</dbReference>
<dbReference type="InterPro" id="IPR020479">
    <property type="entry name" value="HD_metazoa"/>
</dbReference>
<dbReference type="InterPro" id="IPR017970">
    <property type="entry name" value="Homeobox_CS"/>
</dbReference>
<dbReference type="InterPro" id="IPR009057">
    <property type="entry name" value="Homeodomain-like_sf"/>
</dbReference>
<dbReference type="InterPro" id="IPR050674">
    <property type="entry name" value="Msh_Homeobox_Regulators"/>
</dbReference>
<dbReference type="PANTHER" id="PTHR24338">
    <property type="entry name" value="HOMEOBOX PROTEIN MSX"/>
    <property type="match status" value="1"/>
</dbReference>
<dbReference type="PANTHER" id="PTHR24338:SF8">
    <property type="entry name" value="HOMEOBOX PROTEIN MSX-1"/>
    <property type="match status" value="1"/>
</dbReference>
<dbReference type="Pfam" id="PF00046">
    <property type="entry name" value="Homeodomain"/>
    <property type="match status" value="1"/>
</dbReference>
<dbReference type="PRINTS" id="PR00024">
    <property type="entry name" value="HOMEOBOX"/>
</dbReference>
<dbReference type="SMART" id="SM00389">
    <property type="entry name" value="HOX"/>
    <property type="match status" value="1"/>
</dbReference>
<dbReference type="SUPFAM" id="SSF46689">
    <property type="entry name" value="Homeodomain-like"/>
    <property type="match status" value="1"/>
</dbReference>
<dbReference type="PROSITE" id="PS00027">
    <property type="entry name" value="HOMEOBOX_1"/>
    <property type="match status" value="1"/>
</dbReference>
<dbReference type="PROSITE" id="PS50071">
    <property type="entry name" value="HOMEOBOX_2"/>
    <property type="match status" value="1"/>
</dbReference>
<organism>
    <name type="scientific">Leontopithecus rosalia</name>
    <name type="common">Golden lion tamarin</name>
    <dbReference type="NCBI Taxonomy" id="30588"/>
    <lineage>
        <taxon>Eukaryota</taxon>
        <taxon>Metazoa</taxon>
        <taxon>Chordata</taxon>
        <taxon>Craniata</taxon>
        <taxon>Vertebrata</taxon>
        <taxon>Euteleostomi</taxon>
        <taxon>Mammalia</taxon>
        <taxon>Eutheria</taxon>
        <taxon>Euarchontoglires</taxon>
        <taxon>Primates</taxon>
        <taxon>Haplorrhini</taxon>
        <taxon>Platyrrhini</taxon>
        <taxon>Cebidae</taxon>
        <taxon>Callitrichinae</taxon>
        <taxon>Leontopithecus</taxon>
    </lineage>
</organism>
<feature type="chain" id="PRO_0000049088" description="Homeobox protein MSX-1">
    <location>
        <begin position="1" status="less than"/>
        <end position="297"/>
    </location>
</feature>
<feature type="DNA-binding region" description="Homeobox" evidence="3">
    <location>
        <begin position="166"/>
        <end position="225"/>
    </location>
</feature>
<feature type="region of interest" description="Disordered" evidence="4">
    <location>
        <begin position="1"/>
        <end position="51"/>
    </location>
</feature>
<feature type="region of interest" description="Disordered" evidence="4">
    <location>
        <begin position="63"/>
        <end position="111"/>
    </location>
</feature>
<feature type="region of interest" description="Disordered" evidence="4">
    <location>
        <begin position="127"/>
        <end position="157"/>
    </location>
</feature>
<feature type="compositionally biased region" description="Low complexity" evidence="4">
    <location>
        <begin position="25"/>
        <end position="38"/>
    </location>
</feature>
<feature type="compositionally biased region" description="Low complexity" evidence="4">
    <location>
        <begin position="71"/>
        <end position="95"/>
    </location>
</feature>
<feature type="compositionally biased region" description="Basic and acidic residues" evidence="4">
    <location>
        <begin position="127"/>
        <end position="136"/>
    </location>
</feature>
<feature type="cross-link" description="Glycyl lysine isopeptide (Lys-Gly) (interchain with G-Cter in SUMO)" evidence="1">
    <location>
        <position position="9"/>
    </location>
</feature>
<feature type="cross-link" description="Glycyl lysine isopeptide (Lys-Gly) (interchain with G-Cter in SUMO)" evidence="1">
    <location>
        <position position="127"/>
    </location>
</feature>
<feature type="non-terminal residue">
    <location>
        <position position="1"/>
    </location>
</feature>
<accession>Q2VL83</accession>
<keyword id="KW-0217">Developmental protein</keyword>
<keyword id="KW-0238">DNA-binding</keyword>
<keyword id="KW-0371">Homeobox</keyword>
<keyword id="KW-1017">Isopeptide bond</keyword>
<keyword id="KW-0539">Nucleus</keyword>
<keyword id="KW-0678">Repressor</keyword>
<keyword id="KW-0804">Transcription</keyword>
<keyword id="KW-0805">Transcription regulation</keyword>
<keyword id="KW-0832">Ubl conjugation</keyword>
<reference key="1">
    <citation type="journal article" date="2006" name="Mol. Biol. Evol.">
        <title>Molecular evolution of the primate developmental genes MSX1 and PAX9.</title>
        <authorList>
            <person name="Perry G.H."/>
            <person name="Verrelli B.C."/>
            <person name="Stone A.C."/>
        </authorList>
    </citation>
    <scope>NUCLEOTIDE SEQUENCE [GENOMIC DNA]</scope>
    <source>
        <strain>Isolate PR00786</strain>
    </source>
</reference>
<name>MSX1_LEORO</name>
<sequence length="297" mass="30974">MTSLPLGVKVEDSAFGKPAGGGSGQSPSSAAATAAAVGADEEGAKPKVSPSLLPFSVEALMADHRKPGAKESSLAASESAQAAGGLAQPLGVPPGSLGAPDAPSSPRPLGHFSVGGLLKLPEDALVKAESPEKPERTPWMQSPRFSPPPARRLSPPACTLRKHKTNRKPRTPFTTAQLLALERKFRQKQYLSIAERAEFSSSLSLTETQVKIWFQNRRAKAKRLQEAELEKLKMAAKPMLPPAAFGLSFPLGGPAAVAAAAGASLYGASGPFQRAALPVAPVGLYTAHVGYSMYHLT</sequence>
<gene>
    <name evidence="1" type="primary">MSX1</name>
</gene>
<proteinExistence type="inferred from homology"/>
<comment type="function">
    <text evidence="1 2">Acts as a transcriptional repressor (By similarity). Capable of transcription autoinactivation (By similarity). Binds to the consensus sequence 5'-C/GTAAT-3' in downstream activin regulatory elements (DARE) in the gene promoter, thereby repressing the transcription of CGA/alpha-GSU and GNRHR (By similarity). Represses transcription of myoblast differentiation factors (By similarity). Binds to core enhancer regions in target gene promoters of myoblast differentiation factors with binding specificity facilitated by interaction with PIAS1 (By similarity). Regulates, in a stage-specific manner, a developmental program of gene expression in the fetal tooth bud that controls odontoblast differentiation and proliferation of dental mesenchymal cells (By similarity). At the bud stage, required for mesenchymal molar tooth bud development via facilitating reciprocal signaling between dental epithelial and mesenchymal cells (By similarity). May also regulate expression of Wnt antagonists such as DKK2 and SFPR2 in the developing tooth mesenchyme (By similarity). Required for BMP4 expression in dental mesenchyme cells (By similarity). Also, in response to BMP4, required for BMP4 expression in neighboring dental epithelial cells (By similarity). Required for maximal FGF4-induced expression of SDC1 in dental mesenchyme cells (By similarity). Also in response to SDC1, required for SDC1 expression in neighboring dental epithelial cells (By similarity). At the early bell stage, acts to drive proliferation of dental mesenchyme cells, however during the late bell stage acts as an homeostatic regulator of the cell cycle (By similarity). Regulates proliferation and inhibits premature mesenchymal odontogenesis during the bell stage via inhibition of the Wnt signaling component CTNNB1 and subsequent repression of the odontoblast differentiation factors BMP2, BMP4, LEF1, ALPL and BGLAP/OCN (By similarity). Additionally, required for correct development and fusion of the palatal shelves and embryonic mandibular formation (By similarity). Plays a role in embryonic bone formation of the middle ear, skull and nasal bones (By similarity). Required for correct formation and thickness of the nail plate (By similarity). May play a role in limb-pattern formation (By similarity).</text>
</comment>
<comment type="subunit">
    <text evidence="1">Interacts with CREBBP/CBP, TBP and SP1; interaction with these transcription activators may inhibit autoinactivation (By similarity). Interacts (via C-terminus) with PIAS1 (via N-terminus); the interaction is required for the localization of both proteins to the nuclear periphery and specific binding of MSX1 to the core enhancer region in target gene promoters (By similarity). Interacts with H1-5 (By similarity).</text>
</comment>
<comment type="subcellular location">
    <subcellularLocation>
        <location evidence="1">Nucleus</location>
    </subcellularLocation>
    <text evidence="1">Interaction with PIAS1 is required for localization to the nuclear periphery (By similarity).</text>
</comment>
<comment type="PTM">
    <text evidence="1">Sumoylated by PIAS1, desumoylated by SENP1 (By similarity). Sumoylation of Lys-9 and Lys-127 not required for interaction with H1-5, transcriptional repression, inhibition of myoblast differentiation, or binding to gene promoters (By similarity).</text>
</comment>
<comment type="similarity">
    <text evidence="5">Belongs to the Msh homeobox family.</text>
</comment>